<evidence type="ECO:0000255" key="1">
    <source>
        <dbReference type="HAMAP-Rule" id="MF_01368"/>
    </source>
</evidence>
<evidence type="ECO:0000305" key="2"/>
<evidence type="ECO:0007829" key="3">
    <source>
        <dbReference type="PDB" id="8P8B"/>
    </source>
</evidence>
<accession>Q59547</accession>
<organism>
    <name type="scientific">Mycoplasma pneumoniae (strain ATCC 29342 / M129 / Subtype 1)</name>
    <name type="common">Mycoplasmoides pneumoniae</name>
    <dbReference type="NCBI Taxonomy" id="272634"/>
    <lineage>
        <taxon>Bacteria</taxon>
        <taxon>Bacillati</taxon>
        <taxon>Mycoplasmatota</taxon>
        <taxon>Mycoplasmoidales</taxon>
        <taxon>Mycoplasmoidaceae</taxon>
        <taxon>Mycoplasmoides</taxon>
    </lineage>
</organism>
<reference key="1">
    <citation type="journal article" date="1996" name="Nucleic Acids Res.">
        <title>Sequence analysis of 56 kb from the genome of the bacterium Mycoplasma pneumoniae comprising the dnaA region, the atp operon and a cluster of ribosomal protein genes.</title>
        <authorList>
            <person name="Hilbert H."/>
            <person name="Himmelreich R."/>
            <person name="Plagens H."/>
            <person name="Herrmann R."/>
        </authorList>
    </citation>
    <scope>NUCLEOTIDE SEQUENCE [GENOMIC DNA]</scope>
    <source>
        <strain>ATCC 29342 / M129 / Subtype 1</strain>
    </source>
</reference>
<reference key="2">
    <citation type="journal article" date="1996" name="Nucleic Acids Res.">
        <title>Complete sequence analysis of the genome of the bacterium Mycoplasma pneumoniae.</title>
        <authorList>
            <person name="Himmelreich R."/>
            <person name="Hilbert H."/>
            <person name="Plagens H."/>
            <person name="Pirkl E."/>
            <person name="Li B.-C."/>
            <person name="Herrmann R."/>
        </authorList>
    </citation>
    <scope>NUCLEOTIDE SEQUENCE [LARGE SCALE GENOMIC DNA]</scope>
    <source>
        <strain>ATCC 29342 / M129 / Subtype 1</strain>
    </source>
</reference>
<keyword id="KW-0002">3D-structure</keyword>
<keyword id="KW-1185">Reference proteome</keyword>
<keyword id="KW-0687">Ribonucleoprotein</keyword>
<keyword id="KW-0689">Ribosomal protein</keyword>
<dbReference type="EMBL" id="U34795">
    <property type="protein sequence ID" value="AAC43689.1"/>
    <property type="molecule type" value="Genomic_DNA"/>
</dbReference>
<dbReference type="EMBL" id="U00089">
    <property type="protein sequence ID" value="AAB96287.1"/>
    <property type="molecule type" value="Genomic_DNA"/>
</dbReference>
<dbReference type="PIR" id="S62816">
    <property type="entry name" value="S62816"/>
</dbReference>
<dbReference type="RefSeq" id="NP_109880.1">
    <property type="nucleotide sequence ID" value="NC_000912.1"/>
</dbReference>
<dbReference type="RefSeq" id="WP_010874549.1">
    <property type="nucleotide sequence ID" value="NZ_OU342337.1"/>
</dbReference>
<dbReference type="PDB" id="7OOD">
    <property type="method" value="EM"/>
    <property type="resolution" value="3.40 A"/>
    <property type="chains" value="m=1-124"/>
</dbReference>
<dbReference type="PDB" id="7P6Z">
    <property type="method" value="EM"/>
    <property type="resolution" value="3.50 A"/>
    <property type="chains" value="m=1-124"/>
</dbReference>
<dbReference type="PDB" id="7PAH">
    <property type="method" value="EM"/>
    <property type="resolution" value="9.50 A"/>
    <property type="chains" value="m=1-124"/>
</dbReference>
<dbReference type="PDB" id="7PAI">
    <property type="method" value="EM"/>
    <property type="resolution" value="6.70 A"/>
    <property type="chains" value="m=1-124"/>
</dbReference>
<dbReference type="PDB" id="7PAJ">
    <property type="method" value="EM"/>
    <property type="resolution" value="7.30 A"/>
    <property type="chains" value="m=1-124"/>
</dbReference>
<dbReference type="PDB" id="7PAK">
    <property type="method" value="EM"/>
    <property type="resolution" value="5.30 A"/>
    <property type="chains" value="m=1-124"/>
</dbReference>
<dbReference type="PDB" id="7PAL">
    <property type="method" value="EM"/>
    <property type="resolution" value="4.70 A"/>
    <property type="chains" value="m=1-124"/>
</dbReference>
<dbReference type="PDB" id="7PAM">
    <property type="method" value="EM"/>
    <property type="resolution" value="6.80 A"/>
    <property type="chains" value="m=1-124"/>
</dbReference>
<dbReference type="PDB" id="7PAN">
    <property type="method" value="EM"/>
    <property type="resolution" value="9.70 A"/>
    <property type="chains" value="m=1-124"/>
</dbReference>
<dbReference type="PDB" id="7PAO">
    <property type="method" value="EM"/>
    <property type="resolution" value="7.00 A"/>
    <property type="chains" value="m=1-124"/>
</dbReference>
<dbReference type="PDB" id="7PAQ">
    <property type="method" value="EM"/>
    <property type="resolution" value="8.90 A"/>
    <property type="chains" value="m=1-124"/>
</dbReference>
<dbReference type="PDB" id="7PAR">
    <property type="method" value="EM"/>
    <property type="resolution" value="8.20 A"/>
    <property type="chains" value="m=1-124"/>
</dbReference>
<dbReference type="PDB" id="7PAS">
    <property type="method" value="EM"/>
    <property type="resolution" value="16.00 A"/>
    <property type="chains" value="m=1-124"/>
</dbReference>
<dbReference type="PDB" id="7PAT">
    <property type="method" value="EM"/>
    <property type="resolution" value="9.20 A"/>
    <property type="chains" value="m=1-124"/>
</dbReference>
<dbReference type="PDB" id="7PAU">
    <property type="method" value="EM"/>
    <property type="resolution" value="8.30 A"/>
    <property type="chains" value="m=1-124"/>
</dbReference>
<dbReference type="PDB" id="7PH9">
    <property type="method" value="EM"/>
    <property type="resolution" value="8.70 A"/>
    <property type="chains" value="m=1-124"/>
</dbReference>
<dbReference type="PDB" id="7PHA">
    <property type="method" value="EM"/>
    <property type="resolution" value="8.50 A"/>
    <property type="chains" value="m=1-124"/>
</dbReference>
<dbReference type="PDB" id="7PHB">
    <property type="method" value="EM"/>
    <property type="resolution" value="4.90 A"/>
    <property type="chains" value="m=1-124"/>
</dbReference>
<dbReference type="PDB" id="7PHC">
    <property type="method" value="EM"/>
    <property type="resolution" value="9.90 A"/>
    <property type="chains" value="m=1-124"/>
</dbReference>
<dbReference type="PDB" id="7PI8">
    <property type="method" value="EM"/>
    <property type="resolution" value="8.90 A"/>
    <property type="chains" value="m=1-124"/>
</dbReference>
<dbReference type="PDB" id="7PI9">
    <property type="method" value="EM"/>
    <property type="resolution" value="6.30 A"/>
    <property type="chains" value="m=1-124"/>
</dbReference>
<dbReference type="PDB" id="7PIA">
    <property type="method" value="EM"/>
    <property type="resolution" value="13.60 A"/>
    <property type="chains" value="m=1-124"/>
</dbReference>
<dbReference type="PDB" id="7PIB">
    <property type="method" value="EM"/>
    <property type="resolution" value="4.70 A"/>
    <property type="chains" value="m=1-124"/>
</dbReference>
<dbReference type="PDB" id="7PIC">
    <property type="method" value="EM"/>
    <property type="resolution" value="9.10 A"/>
    <property type="chains" value="m=1-124"/>
</dbReference>
<dbReference type="PDB" id="7PIO">
    <property type="method" value="EM"/>
    <property type="resolution" value="9.50 A"/>
    <property type="chains" value="m=1-124"/>
</dbReference>
<dbReference type="PDB" id="7PIP">
    <property type="method" value="EM"/>
    <property type="resolution" value="9.30 A"/>
    <property type="chains" value="m=1-124"/>
</dbReference>
<dbReference type="PDB" id="7PIQ">
    <property type="method" value="EM"/>
    <property type="resolution" value="9.70 A"/>
    <property type="chains" value="m=1-124"/>
</dbReference>
<dbReference type="PDB" id="7PIR">
    <property type="method" value="EM"/>
    <property type="resolution" value="12.10 A"/>
    <property type="chains" value="m=1-124"/>
</dbReference>
<dbReference type="PDB" id="7PIS">
    <property type="method" value="EM"/>
    <property type="resolution" value="15.00 A"/>
    <property type="chains" value="m=1-124"/>
</dbReference>
<dbReference type="PDB" id="7PIT">
    <property type="method" value="EM"/>
    <property type="resolution" value="5.70 A"/>
    <property type="chains" value="m=1-124"/>
</dbReference>
<dbReference type="PDB" id="8P7X">
    <property type="method" value="EM"/>
    <property type="resolution" value="3.03 A"/>
    <property type="chains" value="m=1-124"/>
</dbReference>
<dbReference type="PDB" id="8P7Y">
    <property type="method" value="EM"/>
    <property type="resolution" value="3.70 A"/>
    <property type="chains" value="m=1-124"/>
</dbReference>
<dbReference type="PDB" id="8P8B">
    <property type="method" value="EM"/>
    <property type="resolution" value="2.90 A"/>
    <property type="chains" value="m=1-124"/>
</dbReference>
<dbReference type="PDB" id="8P8V">
    <property type="method" value="EM"/>
    <property type="resolution" value="8.70 A"/>
    <property type="chains" value="m=1-124"/>
</dbReference>
<dbReference type="PDB" id="8P8W">
    <property type="method" value="EM"/>
    <property type="resolution" value="8.70 A"/>
    <property type="chains" value="m=1-124"/>
</dbReference>
<dbReference type="PDBsum" id="7OOD"/>
<dbReference type="PDBsum" id="7P6Z"/>
<dbReference type="PDBsum" id="7PAH"/>
<dbReference type="PDBsum" id="7PAI"/>
<dbReference type="PDBsum" id="7PAJ"/>
<dbReference type="PDBsum" id="7PAK"/>
<dbReference type="PDBsum" id="7PAL"/>
<dbReference type="PDBsum" id="7PAM"/>
<dbReference type="PDBsum" id="7PAN"/>
<dbReference type="PDBsum" id="7PAO"/>
<dbReference type="PDBsum" id="7PAQ"/>
<dbReference type="PDBsum" id="7PAR"/>
<dbReference type="PDBsum" id="7PAS"/>
<dbReference type="PDBsum" id="7PAT"/>
<dbReference type="PDBsum" id="7PAU"/>
<dbReference type="PDBsum" id="7PH9"/>
<dbReference type="PDBsum" id="7PHA"/>
<dbReference type="PDBsum" id="7PHB"/>
<dbReference type="PDBsum" id="7PHC"/>
<dbReference type="PDBsum" id="7PI8"/>
<dbReference type="PDBsum" id="7PI9"/>
<dbReference type="PDBsum" id="7PIA"/>
<dbReference type="PDBsum" id="7PIB"/>
<dbReference type="PDBsum" id="7PIC"/>
<dbReference type="PDBsum" id="7PIO"/>
<dbReference type="PDBsum" id="7PIP"/>
<dbReference type="PDBsum" id="7PIQ"/>
<dbReference type="PDBsum" id="7PIR"/>
<dbReference type="PDBsum" id="7PIS"/>
<dbReference type="PDBsum" id="7PIT"/>
<dbReference type="PDBsum" id="8P7X"/>
<dbReference type="PDBsum" id="8P7Y"/>
<dbReference type="PDBsum" id="8P8B"/>
<dbReference type="PDBsum" id="8P8V"/>
<dbReference type="PDBsum" id="8P8W"/>
<dbReference type="EMDB" id="EMD-13234"/>
<dbReference type="EMDB" id="EMD-13272"/>
<dbReference type="EMDB" id="EMD-13273"/>
<dbReference type="EMDB" id="EMD-13274"/>
<dbReference type="EMDB" id="EMD-13275"/>
<dbReference type="EMDB" id="EMD-13276"/>
<dbReference type="EMDB" id="EMD-13277"/>
<dbReference type="EMDB" id="EMD-13278"/>
<dbReference type="EMDB" id="EMD-13279"/>
<dbReference type="EMDB" id="EMD-13280"/>
<dbReference type="EMDB" id="EMD-13281"/>
<dbReference type="EMDB" id="EMD-13282"/>
<dbReference type="EMDB" id="EMD-13285"/>
<dbReference type="EMDB" id="EMD-13286"/>
<dbReference type="EMDB" id="EMD-13410"/>
<dbReference type="EMDB" id="EMD-13411"/>
<dbReference type="EMDB" id="EMD-13412"/>
<dbReference type="EMDB" id="EMD-13413"/>
<dbReference type="EMDB" id="EMD-13432"/>
<dbReference type="EMDB" id="EMD-13433"/>
<dbReference type="EMDB" id="EMD-13434"/>
<dbReference type="EMDB" id="EMD-13435"/>
<dbReference type="EMDB" id="EMD-13436"/>
<dbReference type="EMDB" id="EMD-13445"/>
<dbReference type="EMDB" id="EMD-13446"/>
<dbReference type="EMDB" id="EMD-13447"/>
<dbReference type="EMDB" id="EMD-13448"/>
<dbReference type="EMDB" id="EMD-13449"/>
<dbReference type="EMDB" id="EMD-13450"/>
<dbReference type="SMR" id="Q59547"/>
<dbReference type="IntAct" id="Q59547">
    <property type="interactions" value="2"/>
</dbReference>
<dbReference type="STRING" id="272634.MPN_192"/>
<dbReference type="EnsemblBacteria" id="AAB96287">
    <property type="protein sequence ID" value="AAB96287"/>
    <property type="gene ID" value="MPN_192"/>
</dbReference>
<dbReference type="GeneID" id="66609160"/>
<dbReference type="KEGG" id="mpn:MPN_192"/>
<dbReference type="PATRIC" id="fig|272634.6.peg.210"/>
<dbReference type="HOGENOM" id="CLU_074407_2_2_14"/>
<dbReference type="OrthoDB" id="9809073at2"/>
<dbReference type="BioCyc" id="MPNE272634:G1GJ3-307-MONOMER"/>
<dbReference type="Proteomes" id="UP000000808">
    <property type="component" value="Chromosome"/>
</dbReference>
<dbReference type="GO" id="GO:0022625">
    <property type="term" value="C:cytosolic large ribosomal subunit"/>
    <property type="evidence" value="ECO:0007669"/>
    <property type="project" value="TreeGrafter"/>
</dbReference>
<dbReference type="GO" id="GO:0003735">
    <property type="term" value="F:structural constituent of ribosome"/>
    <property type="evidence" value="ECO:0007669"/>
    <property type="project" value="InterPro"/>
</dbReference>
<dbReference type="GO" id="GO:0006412">
    <property type="term" value="P:translation"/>
    <property type="evidence" value="ECO:0007669"/>
    <property type="project" value="UniProtKB-UniRule"/>
</dbReference>
<dbReference type="Gene3D" id="3.90.1030.10">
    <property type="entry name" value="Ribosomal protein L17"/>
    <property type="match status" value="1"/>
</dbReference>
<dbReference type="HAMAP" id="MF_01368">
    <property type="entry name" value="Ribosomal_bL17"/>
    <property type="match status" value="1"/>
</dbReference>
<dbReference type="InterPro" id="IPR000456">
    <property type="entry name" value="Ribosomal_bL17"/>
</dbReference>
<dbReference type="InterPro" id="IPR047859">
    <property type="entry name" value="Ribosomal_bL17_CS"/>
</dbReference>
<dbReference type="InterPro" id="IPR036373">
    <property type="entry name" value="Ribosomal_bL17_sf"/>
</dbReference>
<dbReference type="NCBIfam" id="TIGR00059">
    <property type="entry name" value="L17"/>
    <property type="match status" value="1"/>
</dbReference>
<dbReference type="PANTHER" id="PTHR14413:SF16">
    <property type="entry name" value="LARGE RIBOSOMAL SUBUNIT PROTEIN BL17M"/>
    <property type="match status" value="1"/>
</dbReference>
<dbReference type="PANTHER" id="PTHR14413">
    <property type="entry name" value="RIBOSOMAL PROTEIN L17"/>
    <property type="match status" value="1"/>
</dbReference>
<dbReference type="Pfam" id="PF01196">
    <property type="entry name" value="Ribosomal_L17"/>
    <property type="match status" value="1"/>
</dbReference>
<dbReference type="SUPFAM" id="SSF64263">
    <property type="entry name" value="Prokaryotic ribosomal protein L17"/>
    <property type="match status" value="1"/>
</dbReference>
<dbReference type="PROSITE" id="PS01167">
    <property type="entry name" value="RIBOSOMAL_L17"/>
    <property type="match status" value="1"/>
</dbReference>
<sequence length="124" mass="14245">MSYINKPGKTSAWRVMTVRQQVSAVLAYGKIETTLKKAKNTQKRLDKLITLAKVDNFNNRRQVKKWLLNTNLFDVDQLMDHLFSKVAPKYEKTPGGYSRVLKLGPRRGDATEMAILQLTDAKYK</sequence>
<name>RL17_MYCPN</name>
<protein>
    <recommendedName>
        <fullName evidence="1">Large ribosomal subunit protein bL17</fullName>
    </recommendedName>
    <alternativeName>
        <fullName evidence="2">50S ribosomal protein L17</fullName>
    </alternativeName>
</protein>
<proteinExistence type="evidence at protein level"/>
<feature type="chain" id="PRO_0000175534" description="Large ribosomal subunit protein bL17">
    <location>
        <begin position="1"/>
        <end position="124"/>
    </location>
</feature>
<feature type="helix" evidence="3">
    <location>
        <begin position="11"/>
        <end position="27"/>
    </location>
</feature>
<feature type="strand" evidence="3">
    <location>
        <begin position="29"/>
        <end position="34"/>
    </location>
</feature>
<feature type="helix" evidence="3">
    <location>
        <begin position="35"/>
        <end position="51"/>
    </location>
</feature>
<feature type="helix" evidence="3">
    <location>
        <begin position="57"/>
        <end position="63"/>
    </location>
</feature>
<feature type="turn" evidence="3">
    <location>
        <begin position="64"/>
        <end position="66"/>
    </location>
</feature>
<feature type="strand" evidence="3">
    <location>
        <begin position="71"/>
        <end position="73"/>
    </location>
</feature>
<feature type="helix" evidence="3">
    <location>
        <begin position="77"/>
        <end position="84"/>
    </location>
</feature>
<feature type="helix" evidence="3">
    <location>
        <begin position="87"/>
        <end position="89"/>
    </location>
</feature>
<feature type="strand" evidence="3">
    <location>
        <begin position="90"/>
        <end position="92"/>
    </location>
</feature>
<feature type="strand" evidence="3">
    <location>
        <begin position="98"/>
        <end position="105"/>
    </location>
</feature>
<feature type="turn" evidence="3">
    <location>
        <begin position="107"/>
        <end position="109"/>
    </location>
</feature>
<feature type="strand" evidence="3">
    <location>
        <begin position="112"/>
        <end position="118"/>
    </location>
</feature>
<gene>
    <name evidence="1" type="primary">rplQ</name>
    <name type="ordered locus">MPN_192</name>
    <name type="ORF">MP639</name>
</gene>
<comment type="subunit">
    <text evidence="1">Part of the 50S ribosomal subunit. Contacts protein L32.</text>
</comment>
<comment type="similarity">
    <text evidence="1">Belongs to the bacterial ribosomal protein bL17 family.</text>
</comment>